<organism>
    <name type="scientific">Streptococcus pyogenes serotype M6 (strain ATCC BAA-946 / MGAS10394)</name>
    <dbReference type="NCBI Taxonomy" id="286636"/>
    <lineage>
        <taxon>Bacteria</taxon>
        <taxon>Bacillati</taxon>
        <taxon>Bacillota</taxon>
        <taxon>Bacilli</taxon>
        <taxon>Lactobacillales</taxon>
        <taxon>Streptococcaceae</taxon>
        <taxon>Streptococcus</taxon>
    </lineage>
</organism>
<comment type="function">
    <text evidence="1">Peptide chain release factor 1 directs the termination of translation in response to the peptide chain termination codons UAG and UAA.</text>
</comment>
<comment type="subcellular location">
    <subcellularLocation>
        <location evidence="1">Cytoplasm</location>
    </subcellularLocation>
</comment>
<comment type="PTM">
    <text evidence="1">Methylated by PrmC. Methylation increases the termination efficiency of RF1.</text>
</comment>
<comment type="similarity">
    <text evidence="1">Belongs to the prokaryotic/mitochondrial release factor family.</text>
</comment>
<gene>
    <name evidence="1" type="primary">prfA</name>
    <name type="ordered locus">M6_Spy0859</name>
</gene>
<dbReference type="EMBL" id="CP000003">
    <property type="protein sequence ID" value="AAT86994.1"/>
    <property type="molecule type" value="Genomic_DNA"/>
</dbReference>
<dbReference type="RefSeq" id="WP_011184507.1">
    <property type="nucleotide sequence ID" value="NC_006086.1"/>
</dbReference>
<dbReference type="SMR" id="Q5XC69"/>
<dbReference type="KEGG" id="spa:M6_Spy0859"/>
<dbReference type="HOGENOM" id="CLU_036856_0_1_9"/>
<dbReference type="Proteomes" id="UP000001167">
    <property type="component" value="Chromosome"/>
</dbReference>
<dbReference type="GO" id="GO:0005737">
    <property type="term" value="C:cytoplasm"/>
    <property type="evidence" value="ECO:0007669"/>
    <property type="project" value="UniProtKB-SubCell"/>
</dbReference>
<dbReference type="GO" id="GO:0016149">
    <property type="term" value="F:translation release factor activity, codon specific"/>
    <property type="evidence" value="ECO:0007669"/>
    <property type="project" value="UniProtKB-UniRule"/>
</dbReference>
<dbReference type="FunFam" id="3.30.160.20:FF:000027">
    <property type="entry name" value="Peptide chain release factor 1"/>
    <property type="match status" value="1"/>
</dbReference>
<dbReference type="FunFam" id="3.30.70.1660:FF:000002">
    <property type="entry name" value="Peptide chain release factor 1"/>
    <property type="match status" value="1"/>
</dbReference>
<dbReference type="FunFam" id="3.30.70.1660:FF:000004">
    <property type="entry name" value="Peptide chain release factor 1"/>
    <property type="match status" value="1"/>
</dbReference>
<dbReference type="Gene3D" id="3.30.160.20">
    <property type="match status" value="1"/>
</dbReference>
<dbReference type="Gene3D" id="3.30.70.1660">
    <property type="match status" value="1"/>
</dbReference>
<dbReference type="Gene3D" id="6.10.140.1950">
    <property type="match status" value="1"/>
</dbReference>
<dbReference type="HAMAP" id="MF_00093">
    <property type="entry name" value="Rel_fac_1"/>
    <property type="match status" value="1"/>
</dbReference>
<dbReference type="InterPro" id="IPR005139">
    <property type="entry name" value="PCRF"/>
</dbReference>
<dbReference type="InterPro" id="IPR000352">
    <property type="entry name" value="Pep_chain_release_fac_I"/>
</dbReference>
<dbReference type="InterPro" id="IPR045853">
    <property type="entry name" value="Pep_chain_release_fac_I_sf"/>
</dbReference>
<dbReference type="InterPro" id="IPR050057">
    <property type="entry name" value="Prokaryotic/Mito_RF"/>
</dbReference>
<dbReference type="InterPro" id="IPR004373">
    <property type="entry name" value="RF-1"/>
</dbReference>
<dbReference type="NCBIfam" id="TIGR00019">
    <property type="entry name" value="prfA"/>
    <property type="match status" value="1"/>
</dbReference>
<dbReference type="NCBIfam" id="NF001859">
    <property type="entry name" value="PRK00591.1"/>
    <property type="match status" value="1"/>
</dbReference>
<dbReference type="PANTHER" id="PTHR43804">
    <property type="entry name" value="LD18447P"/>
    <property type="match status" value="1"/>
</dbReference>
<dbReference type="PANTHER" id="PTHR43804:SF7">
    <property type="entry name" value="LD18447P"/>
    <property type="match status" value="1"/>
</dbReference>
<dbReference type="Pfam" id="PF03462">
    <property type="entry name" value="PCRF"/>
    <property type="match status" value="1"/>
</dbReference>
<dbReference type="Pfam" id="PF00472">
    <property type="entry name" value="RF-1"/>
    <property type="match status" value="1"/>
</dbReference>
<dbReference type="SMART" id="SM00937">
    <property type="entry name" value="PCRF"/>
    <property type="match status" value="1"/>
</dbReference>
<dbReference type="SUPFAM" id="SSF75620">
    <property type="entry name" value="Release factor"/>
    <property type="match status" value="1"/>
</dbReference>
<dbReference type="PROSITE" id="PS00745">
    <property type="entry name" value="RF_PROK_I"/>
    <property type="match status" value="1"/>
</dbReference>
<protein>
    <recommendedName>
        <fullName evidence="1">Peptide chain release factor 1</fullName>
        <shortName evidence="1">RF-1</shortName>
    </recommendedName>
</protein>
<reference key="1">
    <citation type="journal article" date="2004" name="J. Infect. Dis.">
        <title>Progress toward characterization of the group A Streptococcus metagenome: complete genome sequence of a macrolide-resistant serotype M6 strain.</title>
        <authorList>
            <person name="Banks D.J."/>
            <person name="Porcella S.F."/>
            <person name="Barbian K.D."/>
            <person name="Beres S.B."/>
            <person name="Philips L.E."/>
            <person name="Voyich J.M."/>
            <person name="DeLeo F.R."/>
            <person name="Martin J.M."/>
            <person name="Somerville G.A."/>
            <person name="Musser J.M."/>
        </authorList>
    </citation>
    <scope>NUCLEOTIDE SEQUENCE [LARGE SCALE GENOMIC DNA]</scope>
    <source>
        <strain>ATCC BAA-946 / MGAS10394</strain>
    </source>
</reference>
<accession>Q5XC69</accession>
<keyword id="KW-0963">Cytoplasm</keyword>
<keyword id="KW-0488">Methylation</keyword>
<keyword id="KW-0648">Protein biosynthesis</keyword>
<evidence type="ECO:0000255" key="1">
    <source>
        <dbReference type="HAMAP-Rule" id="MF_00093"/>
    </source>
</evidence>
<sequence>MNIYDQLQAVEDRYEELGELLSDPDVVSDTKRFMELSREEANTRETVTAYREYKQVIQTISDAEEMIKDASGDPELEEMAKEELKESKAAKEEYEEKLKILLLPKDPNDDKNIILEIRGAAGGDEAALFAGDLLTMYQKYAETQGWRFEVMESSVNGVGGIKEVVAMVSGQSVYSKLKYESGAHRVQRVPVTESQGRVHTSTATVLVMPEVEEVEYDIDPKDLRVDIYHASGAGGQNVNKVATAVRMVHIPTGIKVEMQEERTQQKNRDKAMKIIRARVADHFAQIAQDEQDAERKSTVGTGDRSERIRTYNFPQNRVTDHRIGLTLQKLDTILSGKMNEVIDALVMYDQTKKLESLNN</sequence>
<proteinExistence type="inferred from homology"/>
<feature type="chain" id="PRO_0000177756" description="Peptide chain release factor 1">
    <location>
        <begin position="1"/>
        <end position="359"/>
    </location>
</feature>
<feature type="modified residue" description="N5-methylglutamine" evidence="1">
    <location>
        <position position="236"/>
    </location>
</feature>
<name>RF1_STRP6</name>